<reference key="1">
    <citation type="journal article" date="2004" name="Nat. Genet.">
        <title>Complete sequencing and characterization of 21,243 full-length human cDNAs.</title>
        <authorList>
            <person name="Ota T."/>
            <person name="Suzuki Y."/>
            <person name="Nishikawa T."/>
            <person name="Otsuki T."/>
            <person name="Sugiyama T."/>
            <person name="Irie R."/>
            <person name="Wakamatsu A."/>
            <person name="Hayashi K."/>
            <person name="Sato H."/>
            <person name="Nagai K."/>
            <person name="Kimura K."/>
            <person name="Makita H."/>
            <person name="Sekine M."/>
            <person name="Obayashi M."/>
            <person name="Nishi T."/>
            <person name="Shibahara T."/>
            <person name="Tanaka T."/>
            <person name="Ishii S."/>
            <person name="Yamamoto J."/>
            <person name="Saito K."/>
            <person name="Kawai Y."/>
            <person name="Isono Y."/>
            <person name="Nakamura Y."/>
            <person name="Nagahari K."/>
            <person name="Murakami K."/>
            <person name="Yasuda T."/>
            <person name="Iwayanagi T."/>
            <person name="Wagatsuma M."/>
            <person name="Shiratori A."/>
            <person name="Sudo H."/>
            <person name="Hosoiri T."/>
            <person name="Kaku Y."/>
            <person name="Kodaira H."/>
            <person name="Kondo H."/>
            <person name="Sugawara M."/>
            <person name="Takahashi M."/>
            <person name="Kanda K."/>
            <person name="Yokoi T."/>
            <person name="Furuya T."/>
            <person name="Kikkawa E."/>
            <person name="Omura Y."/>
            <person name="Abe K."/>
            <person name="Kamihara K."/>
            <person name="Katsuta N."/>
            <person name="Sato K."/>
            <person name="Tanikawa M."/>
            <person name="Yamazaki M."/>
            <person name="Ninomiya K."/>
            <person name="Ishibashi T."/>
            <person name="Yamashita H."/>
            <person name="Murakawa K."/>
            <person name="Fujimori K."/>
            <person name="Tanai H."/>
            <person name="Kimata M."/>
            <person name="Watanabe M."/>
            <person name="Hiraoka S."/>
            <person name="Chiba Y."/>
            <person name="Ishida S."/>
            <person name="Ono Y."/>
            <person name="Takiguchi S."/>
            <person name="Watanabe S."/>
            <person name="Yosida M."/>
            <person name="Hotuta T."/>
            <person name="Kusano J."/>
            <person name="Kanehori K."/>
            <person name="Takahashi-Fujii A."/>
            <person name="Hara H."/>
            <person name="Tanase T.-O."/>
            <person name="Nomura Y."/>
            <person name="Togiya S."/>
            <person name="Komai F."/>
            <person name="Hara R."/>
            <person name="Takeuchi K."/>
            <person name="Arita M."/>
            <person name="Imose N."/>
            <person name="Musashino K."/>
            <person name="Yuuki H."/>
            <person name="Oshima A."/>
            <person name="Sasaki N."/>
            <person name="Aotsuka S."/>
            <person name="Yoshikawa Y."/>
            <person name="Matsunawa H."/>
            <person name="Ichihara T."/>
            <person name="Shiohata N."/>
            <person name="Sano S."/>
            <person name="Moriya S."/>
            <person name="Momiyama H."/>
            <person name="Satoh N."/>
            <person name="Takami S."/>
            <person name="Terashima Y."/>
            <person name="Suzuki O."/>
            <person name="Nakagawa S."/>
            <person name="Senoh A."/>
            <person name="Mizoguchi H."/>
            <person name="Goto Y."/>
            <person name="Shimizu F."/>
            <person name="Wakebe H."/>
            <person name="Hishigaki H."/>
            <person name="Watanabe T."/>
            <person name="Sugiyama A."/>
            <person name="Takemoto M."/>
            <person name="Kawakami B."/>
            <person name="Yamazaki M."/>
            <person name="Watanabe K."/>
            <person name="Kumagai A."/>
            <person name="Itakura S."/>
            <person name="Fukuzumi Y."/>
            <person name="Fujimori Y."/>
            <person name="Komiyama M."/>
            <person name="Tashiro H."/>
            <person name="Tanigami A."/>
            <person name="Fujiwara T."/>
            <person name="Ono T."/>
            <person name="Yamada K."/>
            <person name="Fujii Y."/>
            <person name="Ozaki K."/>
            <person name="Hirao M."/>
            <person name="Ohmori Y."/>
            <person name="Kawabata A."/>
            <person name="Hikiji T."/>
            <person name="Kobatake N."/>
            <person name="Inagaki H."/>
            <person name="Ikema Y."/>
            <person name="Okamoto S."/>
            <person name="Okitani R."/>
            <person name="Kawakami T."/>
            <person name="Noguchi S."/>
            <person name="Itoh T."/>
            <person name="Shigeta K."/>
            <person name="Senba T."/>
            <person name="Matsumura K."/>
            <person name="Nakajima Y."/>
            <person name="Mizuno T."/>
            <person name="Morinaga M."/>
            <person name="Sasaki M."/>
            <person name="Togashi T."/>
            <person name="Oyama M."/>
            <person name="Hata H."/>
            <person name="Watanabe M."/>
            <person name="Komatsu T."/>
            <person name="Mizushima-Sugano J."/>
            <person name="Satoh T."/>
            <person name="Shirai Y."/>
            <person name="Takahashi Y."/>
            <person name="Nakagawa K."/>
            <person name="Okumura K."/>
            <person name="Nagase T."/>
            <person name="Nomura N."/>
            <person name="Kikuchi H."/>
            <person name="Masuho Y."/>
            <person name="Yamashita R."/>
            <person name="Nakai K."/>
            <person name="Yada T."/>
            <person name="Nakamura Y."/>
            <person name="Ohara O."/>
            <person name="Isogai T."/>
            <person name="Sugano S."/>
        </authorList>
    </citation>
    <scope>NUCLEOTIDE SEQUENCE [LARGE SCALE MRNA]</scope>
    <source>
        <tissue>Testis</tissue>
    </source>
</reference>
<reference key="2">
    <citation type="submission" date="2001-10" db="EMBL/GenBank/DDBJ databases">
        <authorList>
            <person name="Guo J.H."/>
            <person name="Yu L."/>
        </authorList>
    </citation>
    <scope>NUCLEOTIDE SEQUENCE [LARGE SCALE MRNA]</scope>
</reference>
<reference key="3">
    <citation type="journal article" date="2004" name="Genome Res.">
        <title>The status, quality, and expansion of the NIH full-length cDNA project: the Mammalian Gene Collection (MGC).</title>
        <authorList>
            <consortium name="The MGC Project Team"/>
        </authorList>
    </citation>
    <scope>NUCLEOTIDE SEQUENCE [LARGE SCALE MRNA]</scope>
    <scope>VARIANTS GLY-142 AND GLU-239</scope>
    <source>
        <tissue>Testis</tissue>
    </source>
</reference>
<reference key="4">
    <citation type="journal article" date="2011" name="FASEB J.">
        <title>HIV proteinase inhibitors target the Ddi1-like protein of Leishmania parasites.</title>
        <authorList>
            <person name="White R.E."/>
            <person name="Powell D.J."/>
            <person name="Berry C."/>
        </authorList>
    </citation>
    <scope>FUNCTION</scope>
    <scope>ACTIVITY REGULATION</scope>
</reference>
<reference key="5">
    <citation type="journal article" date="2018" name="Mol. Cell">
        <title>Removal of RTF2 from Stalled Replisomes Promotes Maintenance of Genome Integrity.</title>
        <authorList>
            <person name="Kottemann M.C."/>
            <person name="Conti B.A."/>
            <person name="Lach F.P."/>
            <person name="Smogorzewska A."/>
        </authorList>
    </citation>
    <scope>FUNCTION</scope>
</reference>
<reference key="6">
    <citation type="submission" date="2011-07" db="PDB data bank">
        <title>Retropepsin-like domain of human DDI1.</title>
        <authorList>
            <consortium name="Structural genomics consortium (SGC)"/>
        </authorList>
    </citation>
    <scope>X-RAY CRYSTALLOGRAPHY (1.7 ANGSTROMS) OF 239-367</scope>
</reference>
<sequence>MLITVYCVRRDLSEVTFSLQVSPDFELRNFKVLCEAESRVPVEEIQIIHMERLLIEDHCSLGSYGLKDGDIVVLLQKDNVGPRAPGRAPNQPRVDFSGIAVPGTSSSRPQHPGQQQQRTPAAQRSQGLASGEKVAGLQGLGSPALIRSMLLSNPHDLSLLKERNPPLAEALLSGSLETFSQVLMEQQREKALREQERLRLYTADPLDREAQAKIEEEIRQQNIEENMNIAIEEAPESFGQVTMLYINCKVNGHPLKAFVDSGAQMTIMSQACAERCNIMRLVDRRWAGVAKGVGTQRIIGRVHLAQIQIEGDFLQCSFSILEDQPMDMLLGLDMLRRHQCSIDLKKNVLVIGTTGTQTYFLPEGELPLCSRMVSGQDESSDKEITHSVMDSGRKEH</sequence>
<keyword id="KW-0002">3D-structure</keyword>
<keyword id="KW-0064">Aspartyl protease</keyword>
<keyword id="KW-0378">Hydrolase</keyword>
<keyword id="KW-0645">Protease</keyword>
<keyword id="KW-1267">Proteomics identification</keyword>
<keyword id="KW-1185">Reference proteome</keyword>
<feature type="chain" id="PRO_0000287086" description="Protein DDI1 homolog 1">
    <location>
        <begin position="1"/>
        <end position="396"/>
    </location>
</feature>
<feature type="domain" description="Ubiquitin-like" evidence="2">
    <location>
        <begin position="1"/>
        <end position="81"/>
    </location>
</feature>
<feature type="region of interest" description="Disordered" evidence="3">
    <location>
        <begin position="82"/>
        <end position="130"/>
    </location>
</feature>
<feature type="region of interest" description="Disordered" evidence="3">
    <location>
        <begin position="374"/>
        <end position="396"/>
    </location>
</feature>
<feature type="compositionally biased region" description="Polar residues" evidence="3">
    <location>
        <begin position="103"/>
        <end position="128"/>
    </location>
</feature>
<feature type="compositionally biased region" description="Basic and acidic residues" evidence="3">
    <location>
        <begin position="379"/>
        <end position="396"/>
    </location>
</feature>
<feature type="active site" evidence="7">
    <location>
        <position position="260"/>
    </location>
</feature>
<feature type="sequence variant" id="VAR_032259" description="In dbSNP:rs7102675.">
    <original>G</original>
    <variation>S</variation>
    <location>
        <position position="136"/>
    </location>
</feature>
<feature type="sequence variant" id="VAR_032260" description="In dbSNP:rs17856633." evidence="4">
    <original>S</original>
    <variation>G</variation>
    <location>
        <position position="142"/>
    </location>
</feature>
<feature type="sequence variant" id="VAR_032261" description="In dbSNP:rs17851870." evidence="4">
    <original>G</original>
    <variation>E</variation>
    <location>
        <position position="239"/>
    </location>
</feature>
<feature type="sequence conflict" description="In Ref. 2; AAP97303." evidence="7" ref="2">
    <original>N</original>
    <variation>K</variation>
    <location>
        <position position="153"/>
    </location>
</feature>
<feature type="sequence conflict" description="In Ref. 2; AAP97303." evidence="7" ref="2">
    <original>N</original>
    <variation>K</variation>
    <location>
        <position position="164"/>
    </location>
</feature>
<feature type="sequence conflict" description="In Ref. 2; AAP97303." evidence="7" ref="2">
    <original>A</original>
    <variation>T</variation>
    <location>
        <position position="170"/>
    </location>
</feature>
<feature type="sequence conflict" description="In Ref. 2; AAP97303." evidence="7" ref="2">
    <original>K</original>
    <variation>R</variation>
    <location>
        <position position="213"/>
    </location>
</feature>
<feature type="strand" evidence="10">
    <location>
        <begin position="245"/>
        <end position="250"/>
    </location>
</feature>
<feature type="strand" evidence="10">
    <location>
        <begin position="253"/>
        <end position="259"/>
    </location>
</feature>
<feature type="strand" evidence="10">
    <location>
        <begin position="267"/>
        <end position="269"/>
    </location>
</feature>
<feature type="helix" evidence="10">
    <location>
        <begin position="270"/>
        <end position="275"/>
    </location>
</feature>
<feature type="helix" evidence="10">
    <location>
        <begin position="279"/>
        <end position="281"/>
    </location>
</feature>
<feature type="helix" evidence="10">
    <location>
        <begin position="284"/>
        <end position="286"/>
    </location>
</feature>
<feature type="strand" evidence="10">
    <location>
        <begin position="297"/>
        <end position="309"/>
    </location>
</feature>
<feature type="strand" evidence="10">
    <location>
        <begin position="312"/>
        <end position="321"/>
    </location>
</feature>
<feature type="strand" evidence="10">
    <location>
        <begin position="325"/>
        <end position="330"/>
    </location>
</feature>
<feature type="helix" evidence="10">
    <location>
        <begin position="332"/>
        <end position="337"/>
    </location>
</feature>
<feature type="strand" evidence="10">
    <location>
        <begin position="341"/>
        <end position="343"/>
    </location>
</feature>
<feature type="turn" evidence="10">
    <location>
        <begin position="344"/>
        <end position="347"/>
    </location>
</feature>
<feature type="strand" evidence="10">
    <location>
        <begin position="348"/>
        <end position="350"/>
    </location>
</feature>
<feature type="turn" evidence="10">
    <location>
        <begin position="352"/>
        <end position="354"/>
    </location>
</feature>
<feature type="strand" evidence="10">
    <location>
        <begin position="357"/>
        <end position="359"/>
    </location>
</feature>
<feature type="helix" evidence="10">
    <location>
        <begin position="363"/>
        <end position="365"/>
    </location>
</feature>
<evidence type="ECO:0000250" key="1">
    <source>
        <dbReference type="UniProtKB" id="I7HUG0"/>
    </source>
</evidence>
<evidence type="ECO:0000255" key="2">
    <source>
        <dbReference type="PROSITE-ProRule" id="PRU00214"/>
    </source>
</evidence>
<evidence type="ECO:0000256" key="3">
    <source>
        <dbReference type="SAM" id="MobiDB-lite"/>
    </source>
</evidence>
<evidence type="ECO:0000269" key="4">
    <source>
    </source>
</evidence>
<evidence type="ECO:0000269" key="5">
    <source>
    </source>
</evidence>
<evidence type="ECO:0000269" key="6">
    <source>
    </source>
</evidence>
<evidence type="ECO:0000305" key="7"/>
<evidence type="ECO:0000305" key="8">
    <source>
    </source>
</evidence>
<evidence type="ECO:0000305" key="9">
    <source>
    </source>
</evidence>
<evidence type="ECO:0007829" key="10">
    <source>
        <dbReference type="PDB" id="3S8I"/>
    </source>
</evidence>
<accession>Q8WTU0</accession>
<accession>Q7Z4U6</accession>
<accession>Q8WTS3</accession>
<name>DDI1_HUMAN</name>
<organism>
    <name type="scientific">Homo sapiens</name>
    <name type="common">Human</name>
    <dbReference type="NCBI Taxonomy" id="9606"/>
    <lineage>
        <taxon>Eukaryota</taxon>
        <taxon>Metazoa</taxon>
        <taxon>Chordata</taxon>
        <taxon>Craniata</taxon>
        <taxon>Vertebrata</taxon>
        <taxon>Euteleostomi</taxon>
        <taxon>Mammalia</taxon>
        <taxon>Eutheria</taxon>
        <taxon>Euarchontoglires</taxon>
        <taxon>Primates</taxon>
        <taxon>Haplorrhini</taxon>
        <taxon>Catarrhini</taxon>
        <taxon>Hominidae</taxon>
        <taxon>Homo</taxon>
    </lineage>
</organism>
<dbReference type="EC" id="3.4.23.-" evidence="1"/>
<dbReference type="EMBL" id="AK093336">
    <property type="protein sequence ID" value="BAC04135.1"/>
    <property type="molecule type" value="mRNA"/>
</dbReference>
<dbReference type="EMBL" id="AF429972">
    <property type="protein sequence ID" value="AAP97303.1"/>
    <property type="molecule type" value="mRNA"/>
</dbReference>
<dbReference type="EMBL" id="BC021172">
    <property type="protein sequence ID" value="AAH21172.2"/>
    <property type="molecule type" value="mRNA"/>
</dbReference>
<dbReference type="EMBL" id="BC021710">
    <property type="protein sequence ID" value="AAH21710.1"/>
    <property type="molecule type" value="mRNA"/>
</dbReference>
<dbReference type="EMBL" id="BC022017">
    <property type="protein sequence ID" value="AAH22017.1"/>
    <property type="molecule type" value="mRNA"/>
</dbReference>
<dbReference type="EMBL" id="BC022018">
    <property type="protein sequence ID" value="AAH22018.1"/>
    <property type="molecule type" value="mRNA"/>
</dbReference>
<dbReference type="CCDS" id="CCDS31660.1"/>
<dbReference type="RefSeq" id="NP_001001711.1">
    <property type="nucleotide sequence ID" value="NM_001001711.3"/>
</dbReference>
<dbReference type="PDB" id="3S8I">
    <property type="method" value="X-ray"/>
    <property type="resolution" value="1.70 A"/>
    <property type="chains" value="A/B=239-367"/>
</dbReference>
<dbReference type="PDBsum" id="3S8I"/>
<dbReference type="SMR" id="Q8WTU0"/>
<dbReference type="BioGRID" id="136043">
    <property type="interactions" value="68"/>
</dbReference>
<dbReference type="DIP" id="DIP-60626N"/>
<dbReference type="FunCoup" id="Q8WTU0">
    <property type="interactions" value="213"/>
</dbReference>
<dbReference type="IntAct" id="Q8WTU0">
    <property type="interactions" value="37"/>
</dbReference>
<dbReference type="MINT" id="Q8WTU0"/>
<dbReference type="STRING" id="9606.ENSP00000302805"/>
<dbReference type="MEROPS" id="A28.001"/>
<dbReference type="iPTMnet" id="Q8WTU0"/>
<dbReference type="PhosphoSitePlus" id="Q8WTU0"/>
<dbReference type="BioMuta" id="DDI1"/>
<dbReference type="DMDM" id="74730631"/>
<dbReference type="jPOST" id="Q8WTU0"/>
<dbReference type="MassIVE" id="Q8WTU0"/>
<dbReference type="PaxDb" id="9606-ENSP00000302805"/>
<dbReference type="PeptideAtlas" id="Q8WTU0"/>
<dbReference type="ProteomicsDB" id="74599"/>
<dbReference type="Antibodypedia" id="31840">
    <property type="antibodies" value="62 antibodies from 22 providers"/>
</dbReference>
<dbReference type="DNASU" id="414301"/>
<dbReference type="Ensembl" id="ENST00000302259.5">
    <property type="protein sequence ID" value="ENSP00000302805.3"/>
    <property type="gene ID" value="ENSG00000170967.5"/>
</dbReference>
<dbReference type="GeneID" id="414301"/>
<dbReference type="KEGG" id="hsa:414301"/>
<dbReference type="MANE-Select" id="ENST00000302259.5">
    <property type="protein sequence ID" value="ENSP00000302805.3"/>
    <property type="RefSeq nucleotide sequence ID" value="NM_001001711.3"/>
    <property type="RefSeq protein sequence ID" value="NP_001001711.1"/>
</dbReference>
<dbReference type="UCSC" id="uc001phr.3">
    <property type="organism name" value="human"/>
</dbReference>
<dbReference type="AGR" id="HGNC:18961"/>
<dbReference type="CTD" id="414301"/>
<dbReference type="DisGeNET" id="414301"/>
<dbReference type="GeneCards" id="DDI1"/>
<dbReference type="HGNC" id="HGNC:18961">
    <property type="gene designation" value="DDI1"/>
</dbReference>
<dbReference type="HPA" id="ENSG00000170967">
    <property type="expression patterns" value="Tissue enriched (testis)"/>
</dbReference>
<dbReference type="MIM" id="620870">
    <property type="type" value="gene"/>
</dbReference>
<dbReference type="neXtProt" id="NX_Q8WTU0"/>
<dbReference type="OpenTargets" id="ENSG00000170967"/>
<dbReference type="PharmGKB" id="PA142672003"/>
<dbReference type="VEuPathDB" id="HostDB:ENSG00000170967"/>
<dbReference type="eggNOG" id="KOG0012">
    <property type="taxonomic scope" value="Eukaryota"/>
</dbReference>
<dbReference type="GeneTree" id="ENSGT00950000182999"/>
<dbReference type="HOGENOM" id="CLU_020435_1_0_1"/>
<dbReference type="InParanoid" id="Q8WTU0"/>
<dbReference type="OMA" id="LYTADPF"/>
<dbReference type="OrthoDB" id="1047367at2759"/>
<dbReference type="PAN-GO" id="Q8WTU0">
    <property type="GO annotations" value="0 GO annotations based on evolutionary models"/>
</dbReference>
<dbReference type="PhylomeDB" id="Q8WTU0"/>
<dbReference type="TreeFam" id="TF333421"/>
<dbReference type="PathwayCommons" id="Q8WTU0"/>
<dbReference type="SignaLink" id="Q8WTU0"/>
<dbReference type="BioGRID-ORCS" id="414301">
    <property type="hits" value="10 hits in 1142 CRISPR screens"/>
</dbReference>
<dbReference type="EvolutionaryTrace" id="Q8WTU0"/>
<dbReference type="GenomeRNAi" id="414301"/>
<dbReference type="Pharos" id="Q8WTU0">
    <property type="development level" value="Tbio"/>
</dbReference>
<dbReference type="PRO" id="PR:Q8WTU0"/>
<dbReference type="Proteomes" id="UP000005640">
    <property type="component" value="Chromosome 11"/>
</dbReference>
<dbReference type="RNAct" id="Q8WTU0">
    <property type="molecule type" value="protein"/>
</dbReference>
<dbReference type="Bgee" id="ENSG00000170967">
    <property type="expression patterns" value="Expressed in sperm and 17 other cell types or tissues"/>
</dbReference>
<dbReference type="GO" id="GO:0004190">
    <property type="term" value="F:aspartic-type endopeptidase activity"/>
    <property type="evidence" value="ECO:0007669"/>
    <property type="project" value="UniProtKB-KW"/>
</dbReference>
<dbReference type="GO" id="GO:0072711">
    <property type="term" value="P:cellular response to hydroxyurea"/>
    <property type="evidence" value="ECO:0000315"/>
    <property type="project" value="UniProtKB"/>
</dbReference>
<dbReference type="GO" id="GO:0010498">
    <property type="term" value="P:proteasomal protein catabolic process"/>
    <property type="evidence" value="ECO:0000315"/>
    <property type="project" value="UniProtKB"/>
</dbReference>
<dbReference type="GO" id="GO:0097752">
    <property type="term" value="P:regulation of DNA stability"/>
    <property type="evidence" value="ECO:0000315"/>
    <property type="project" value="UniProtKB"/>
</dbReference>
<dbReference type="GO" id="GO:0031647">
    <property type="term" value="P:regulation of protein stability"/>
    <property type="evidence" value="ECO:0000315"/>
    <property type="project" value="UniProtKB"/>
</dbReference>
<dbReference type="CDD" id="cd05479">
    <property type="entry name" value="RP_DDI"/>
    <property type="match status" value="1"/>
</dbReference>
<dbReference type="CDD" id="cd01796">
    <property type="entry name" value="Ubl_Ddi1_like"/>
    <property type="match status" value="1"/>
</dbReference>
<dbReference type="FunFam" id="2.40.70.10:FF:000005">
    <property type="entry name" value="DNA damage inducible 1 homolog 2"/>
    <property type="match status" value="1"/>
</dbReference>
<dbReference type="FunFam" id="3.10.20.90:FF:000107">
    <property type="entry name" value="protein DDI1 homolog 2 isoform X1"/>
    <property type="match status" value="1"/>
</dbReference>
<dbReference type="Gene3D" id="2.40.70.10">
    <property type="entry name" value="Acid Proteases"/>
    <property type="match status" value="1"/>
</dbReference>
<dbReference type="Gene3D" id="3.10.20.90">
    <property type="entry name" value="Phosphatidylinositol 3-kinase Catalytic Subunit, Chain A, domain 1"/>
    <property type="match status" value="1"/>
</dbReference>
<dbReference type="InterPro" id="IPR033882">
    <property type="entry name" value="DDI1_N"/>
</dbReference>
<dbReference type="InterPro" id="IPR019103">
    <property type="entry name" value="Peptidase_aspartic_DDI1-type"/>
</dbReference>
<dbReference type="InterPro" id="IPR021109">
    <property type="entry name" value="Peptidase_aspartic_dom_sf"/>
</dbReference>
<dbReference type="InterPro" id="IPR000626">
    <property type="entry name" value="Ubiquitin-like_dom"/>
</dbReference>
<dbReference type="InterPro" id="IPR029071">
    <property type="entry name" value="Ubiquitin-like_domsf"/>
</dbReference>
<dbReference type="PANTHER" id="PTHR15397:SF3">
    <property type="entry name" value="DNA DAMAGE INDUCIBLE 1 HOMOLOG 2"/>
    <property type="match status" value="1"/>
</dbReference>
<dbReference type="PANTHER" id="PTHR15397">
    <property type="entry name" value="SODIUM-GLUCOSE COTRANSPORTER REGULATORY PROTEIN -RELATED"/>
    <property type="match status" value="1"/>
</dbReference>
<dbReference type="Pfam" id="PF09668">
    <property type="entry name" value="Asp_protease"/>
    <property type="match status" value="1"/>
</dbReference>
<dbReference type="Pfam" id="PF24669">
    <property type="entry name" value="Ddi2_HDD"/>
    <property type="match status" value="1"/>
</dbReference>
<dbReference type="Pfam" id="PF00240">
    <property type="entry name" value="ubiquitin"/>
    <property type="match status" value="1"/>
</dbReference>
<dbReference type="SMART" id="SM00213">
    <property type="entry name" value="UBQ"/>
    <property type="match status" value="1"/>
</dbReference>
<dbReference type="SUPFAM" id="SSF50630">
    <property type="entry name" value="Acid proteases"/>
    <property type="match status" value="1"/>
</dbReference>
<dbReference type="SUPFAM" id="SSF54236">
    <property type="entry name" value="Ubiquitin-like"/>
    <property type="match status" value="1"/>
</dbReference>
<dbReference type="PROSITE" id="PS50053">
    <property type="entry name" value="UBIQUITIN_2"/>
    <property type="match status" value="1"/>
</dbReference>
<proteinExistence type="evidence at protein level"/>
<protein>
    <recommendedName>
        <fullName>Protein DDI1 homolog 1</fullName>
        <ecNumber evidence="1">3.4.23.-</ecNumber>
    </recommendedName>
</protein>
<comment type="function">
    <text evidence="6 8 9">Probable aspartic protease (Probable). Seems to act as a proteasomal shuttle which links the proteasome and replication fork proteins like RTF2 (Probable). Required, with DDI2, for cellular survival following replication stress. Together or redudantly with DDI2, removes RTF2 from stalled forks to allow cell cycle progression after replication stress and maintains genome integrity (PubMed:29290612).</text>
</comment>
<comment type="activity regulation">
    <text evidence="5">Inhibited by the proteinase inhibitors amprenavir, indinavir, lopinavir, isovaleryl pepstatin, ritonavir and saquinavir.</text>
</comment>
<comment type="interaction">
    <interactant intactId="EBI-748248">
        <id>Q8WTU0</id>
    </interactant>
    <interactant intactId="EBI-7783254">
        <id>Q9NRJ3</id>
        <label>CCL28</label>
    </interactant>
    <organismsDiffer>false</organismsDiffer>
    <experiments>10</experiments>
</comment>
<comment type="interaction">
    <interactant intactId="EBI-748248">
        <id>Q8WTU0</id>
    </interactant>
    <interactant intactId="EBI-6309037">
        <id>Q8WWM9</id>
        <label>CYGB</label>
    </interactant>
    <organismsDiffer>false</organismsDiffer>
    <experiments>6</experiments>
</comment>
<comment type="interaction">
    <interactant intactId="EBI-748248">
        <id>Q8WTU0</id>
    </interactant>
    <interactant intactId="EBI-395638">
        <id>O14645</id>
        <label>DNALI1</label>
    </interactant>
    <organismsDiffer>false</organismsDiffer>
    <experiments>3</experiments>
</comment>
<comment type="interaction">
    <interactant intactId="EBI-748248">
        <id>Q8WTU0</id>
    </interactant>
    <interactant intactId="EBI-7225287">
        <id>Q96MY7</id>
        <label>FAM161B</label>
    </interactant>
    <organismsDiffer>false</organismsDiffer>
    <experiments>3</experiments>
</comment>
<comment type="interaction">
    <interactant intactId="EBI-748248">
        <id>Q8WTU0</id>
    </interactant>
    <interactant intactId="EBI-751540">
        <id>O95872</id>
        <label>GPANK1</label>
    </interactant>
    <organismsDiffer>false</organismsDiffer>
    <experiments>3</experiments>
</comment>
<comment type="interaction">
    <interactant intactId="EBI-748248">
        <id>Q8WTU0</id>
    </interactant>
    <interactant intactId="EBI-948266">
        <id>O14901</id>
        <label>KLF11</label>
    </interactant>
    <organismsDiffer>false</organismsDiffer>
    <experiments>3</experiments>
</comment>
<comment type="interaction">
    <interactant intactId="EBI-748248">
        <id>Q8WTU0</id>
    </interactant>
    <interactant intactId="EBI-739890">
        <id>Q9P2K6</id>
        <label>KLHL42</label>
    </interactant>
    <organismsDiffer>false</organismsDiffer>
    <experiments>8</experiments>
</comment>
<comment type="interaction">
    <interactant intactId="EBI-748248">
        <id>Q8WTU0</id>
    </interactant>
    <interactant intactId="EBI-2877737">
        <id>Q6ZVX7</id>
        <label>NCCRP1</label>
    </interactant>
    <organismsDiffer>false</organismsDiffer>
    <experiments>3</experiments>
</comment>
<comment type="interaction">
    <interactant intactId="EBI-748248">
        <id>Q8WTU0</id>
    </interactant>
    <interactant intactId="EBI-372273">
        <id>P20618</id>
        <label>PSMB1</label>
    </interactant>
    <organismsDiffer>false</organismsDiffer>
    <experiments>3</experiments>
</comment>
<comment type="interaction">
    <interactant intactId="EBI-748248">
        <id>Q8WTU0</id>
    </interactant>
    <interactant intactId="EBI-9519763">
        <id>Q2PPJ7</id>
        <label>RALGAPA2</label>
    </interactant>
    <organismsDiffer>false</organismsDiffer>
    <experiments>3</experiments>
</comment>
<comment type="interaction">
    <interactant intactId="EBI-748248">
        <id>Q8WTU0</id>
    </interactant>
    <interactant intactId="EBI-366570">
        <id>Q9BUL9</id>
        <label>RPP25</label>
    </interactant>
    <organismsDiffer>false</organismsDiffer>
    <experiments>3</experiments>
</comment>
<comment type="interaction">
    <interactant intactId="EBI-748248">
        <id>Q8WTU0</id>
    </interactant>
    <interactant intactId="EBI-17859611">
        <id>P20132</id>
        <label>SDS</label>
    </interactant>
    <organismsDiffer>false</organismsDiffer>
    <experiments>3</experiments>
</comment>
<comment type="interaction">
    <interactant intactId="EBI-748248">
        <id>Q8WTU0</id>
    </interactant>
    <interactant intactId="EBI-355861">
        <id>Q9H9B4</id>
        <label>SFXN1</label>
    </interactant>
    <organismsDiffer>false</organismsDiffer>
    <experiments>2</experiments>
</comment>
<comment type="interaction">
    <interactant intactId="EBI-748248">
        <id>Q8WTU0</id>
    </interactant>
    <interactant intactId="EBI-8644516">
        <id>Q9BXF9</id>
        <label>TEKT3</label>
    </interactant>
    <organismsDiffer>false</organismsDiffer>
    <experiments>3</experiments>
</comment>
<comment type="interaction">
    <interactant intactId="EBI-748248">
        <id>Q8WTU0</id>
    </interactant>
    <interactant intactId="EBI-355744">
        <id>Q12933</id>
        <label>TRAF2</label>
    </interactant>
    <organismsDiffer>false</organismsDiffer>
    <experiments>3</experiments>
</comment>
<comment type="interaction">
    <interactant intactId="EBI-748248">
        <id>Q8WTU0</id>
    </interactant>
    <interactant intactId="EBI-473850">
        <id>P61086</id>
        <label>UBE2K</label>
    </interactant>
    <organismsDiffer>false</organismsDiffer>
    <experiments>3</experiments>
</comment>
<comment type="interaction">
    <interactant intactId="EBI-748248">
        <id>Q8WTU0</id>
    </interactant>
    <interactant intactId="EBI-743272">
        <id>O75604</id>
        <label>USP2</label>
    </interactant>
    <organismsDiffer>false</organismsDiffer>
    <experiments>3</experiments>
</comment>
<comment type="similarity">
    <text evidence="7">Belongs to the DDI1 family.</text>
</comment>
<gene>
    <name type="primary">DDI1</name>
</gene>